<dbReference type="EC" id="2.1.1.221" evidence="2"/>
<dbReference type="EMBL" id="DS231665">
    <property type="protein sequence ID" value="ESU12419.1"/>
    <property type="molecule type" value="Genomic_DNA"/>
</dbReference>
<dbReference type="EMBL" id="HG970334">
    <property type="protein sequence ID" value="CEF87515.1"/>
    <property type="molecule type" value="Genomic_DNA"/>
</dbReference>
<dbReference type="RefSeq" id="XP_011324995.1">
    <property type="nucleotide sequence ID" value="XM_011326693.1"/>
</dbReference>
<dbReference type="SMR" id="Q4I8X0"/>
<dbReference type="FunCoup" id="Q4I8X0">
    <property type="interactions" value="786"/>
</dbReference>
<dbReference type="STRING" id="229533.Q4I8X0"/>
<dbReference type="GeneID" id="23553472"/>
<dbReference type="KEGG" id="fgr:FGSG_06338"/>
<dbReference type="VEuPathDB" id="FungiDB:FGRAMPH1_01G20071"/>
<dbReference type="eggNOG" id="KOG2967">
    <property type="taxonomic scope" value="Eukaryota"/>
</dbReference>
<dbReference type="HOGENOM" id="CLU_034384_0_0_1"/>
<dbReference type="InParanoid" id="Q4I8X0"/>
<dbReference type="OrthoDB" id="117399at110618"/>
<dbReference type="Proteomes" id="UP000070720">
    <property type="component" value="Chromosome 3"/>
</dbReference>
<dbReference type="GO" id="GO:0005737">
    <property type="term" value="C:cytoplasm"/>
    <property type="evidence" value="ECO:0007669"/>
    <property type="project" value="UniProtKB-SubCell"/>
</dbReference>
<dbReference type="GO" id="GO:0005634">
    <property type="term" value="C:nucleus"/>
    <property type="evidence" value="ECO:0007669"/>
    <property type="project" value="UniProtKB-SubCell"/>
</dbReference>
<dbReference type="GO" id="GO:0052905">
    <property type="term" value="F:tRNA (guanosine(9)-N1)-methyltransferase activity"/>
    <property type="evidence" value="ECO:0007669"/>
    <property type="project" value="UniProtKB-EC"/>
</dbReference>
<dbReference type="GO" id="GO:0000049">
    <property type="term" value="F:tRNA binding"/>
    <property type="evidence" value="ECO:0007669"/>
    <property type="project" value="TreeGrafter"/>
</dbReference>
<dbReference type="GO" id="GO:0002939">
    <property type="term" value="P:tRNA N1-guanine methylation"/>
    <property type="evidence" value="ECO:0007669"/>
    <property type="project" value="TreeGrafter"/>
</dbReference>
<dbReference type="CDD" id="cd18089">
    <property type="entry name" value="SPOUT_Trm10-like"/>
    <property type="match status" value="1"/>
</dbReference>
<dbReference type="Gene3D" id="3.40.1280.30">
    <property type="match status" value="1"/>
</dbReference>
<dbReference type="InterPro" id="IPR028564">
    <property type="entry name" value="MT_TRM10-typ"/>
</dbReference>
<dbReference type="InterPro" id="IPR038459">
    <property type="entry name" value="MT_TRM10-typ_sf"/>
</dbReference>
<dbReference type="InterPro" id="IPR007356">
    <property type="entry name" value="tRNA_m1G_MeTrfase_euk"/>
</dbReference>
<dbReference type="InterPro" id="IPR016009">
    <property type="entry name" value="tRNA_MeTrfase_TRMD/TRM10"/>
</dbReference>
<dbReference type="PANTHER" id="PTHR13563">
    <property type="entry name" value="TRNA (GUANINE-9-) METHYLTRANSFERASE"/>
    <property type="match status" value="1"/>
</dbReference>
<dbReference type="PANTHER" id="PTHR13563:SF13">
    <property type="entry name" value="TRNA METHYLTRANSFERASE 10 HOMOLOG A"/>
    <property type="match status" value="1"/>
</dbReference>
<dbReference type="Pfam" id="PF01746">
    <property type="entry name" value="tRNA_m1G_MT"/>
    <property type="match status" value="1"/>
</dbReference>
<dbReference type="PROSITE" id="PS51675">
    <property type="entry name" value="SAM_MT_TRM10"/>
    <property type="match status" value="1"/>
</dbReference>
<protein>
    <recommendedName>
        <fullName evidence="2">tRNA (guanine(9)-N1)-methyltransferase</fullName>
        <ecNumber evidence="2">2.1.1.221</ecNumber>
    </recommendedName>
    <alternativeName>
        <fullName evidence="2">tRNA methyltransferase 10</fullName>
    </alternativeName>
    <alternativeName>
        <fullName evidence="2">tRNA(m1G9)-methyltransferase</fullName>
        <shortName evidence="2">tRNA(m1G9)MTase</shortName>
    </alternativeName>
</protein>
<gene>
    <name evidence="2" type="primary">TRM10</name>
    <name type="ORF">FGRRES_06338</name>
    <name type="ORF">FGSG_06338</name>
</gene>
<organism>
    <name type="scientific">Gibberella zeae (strain ATCC MYA-4620 / CBS 123657 / FGSC 9075 / NRRL 31084 / PH-1)</name>
    <name type="common">Wheat head blight fungus</name>
    <name type="synonym">Fusarium graminearum</name>
    <dbReference type="NCBI Taxonomy" id="229533"/>
    <lineage>
        <taxon>Eukaryota</taxon>
        <taxon>Fungi</taxon>
        <taxon>Dikarya</taxon>
        <taxon>Ascomycota</taxon>
        <taxon>Pezizomycotina</taxon>
        <taxon>Sordariomycetes</taxon>
        <taxon>Hypocreomycetidae</taxon>
        <taxon>Hypocreales</taxon>
        <taxon>Nectriaceae</taxon>
        <taxon>Fusarium</taxon>
    </lineage>
</organism>
<name>TRM10_GIBZE</name>
<comment type="function">
    <text evidence="2">S-adenosyl-L-methionine-dependent guanine N(1)-methyltransferase that catalyzes the formation of N(1)-methylguanine at position 9 (m1G9) in cytoplasmic tRNA.</text>
</comment>
<comment type="catalytic activity">
    <reaction evidence="2">
        <text>guanosine(9) in tRNA + S-adenosyl-L-methionine = N(1)-methylguanosine(9) in tRNA + S-adenosyl-L-homocysteine + H(+)</text>
        <dbReference type="Rhea" id="RHEA:43156"/>
        <dbReference type="Rhea" id="RHEA-COMP:10367"/>
        <dbReference type="Rhea" id="RHEA-COMP:10368"/>
        <dbReference type="ChEBI" id="CHEBI:15378"/>
        <dbReference type="ChEBI" id="CHEBI:57856"/>
        <dbReference type="ChEBI" id="CHEBI:59789"/>
        <dbReference type="ChEBI" id="CHEBI:73542"/>
        <dbReference type="ChEBI" id="CHEBI:74269"/>
        <dbReference type="EC" id="2.1.1.221"/>
    </reaction>
</comment>
<comment type="subunit">
    <text evidence="1">Monomer.</text>
</comment>
<comment type="subcellular location">
    <subcellularLocation>
        <location evidence="2">Cytoplasm</location>
    </subcellularLocation>
    <subcellularLocation>
        <location evidence="2">Nucleus</location>
    </subcellularLocation>
</comment>
<comment type="similarity">
    <text evidence="3">Belongs to the class IV-like SAM-binding methyltransferase superfamily. TRM10 family.</text>
</comment>
<proteinExistence type="inferred from homology"/>
<keyword id="KW-0963">Cytoplasm</keyword>
<keyword id="KW-0489">Methyltransferase</keyword>
<keyword id="KW-0539">Nucleus</keyword>
<keyword id="KW-1185">Reference proteome</keyword>
<keyword id="KW-0949">S-adenosyl-L-methionine</keyword>
<keyword id="KW-0808">Transferase</keyword>
<keyword id="KW-0819">tRNA processing</keyword>
<feature type="chain" id="PRO_0000060516" description="tRNA (guanine(9)-N1)-methyltransferase">
    <location>
        <begin position="1"/>
        <end position="407"/>
    </location>
</feature>
<feature type="domain" description="SAM-dependent MTase TRM10-type" evidence="3">
    <location>
        <begin position="120"/>
        <end position="356"/>
    </location>
</feature>
<feature type="region of interest" description="Disordered" evidence="4">
    <location>
        <begin position="1"/>
        <end position="105"/>
    </location>
</feature>
<feature type="region of interest" description="Disordered" evidence="4">
    <location>
        <begin position="220"/>
        <end position="256"/>
    </location>
</feature>
<feature type="region of interest" description="Disordered" evidence="4">
    <location>
        <begin position="353"/>
        <end position="407"/>
    </location>
</feature>
<feature type="compositionally biased region" description="Basic and acidic residues" evidence="4">
    <location>
        <begin position="1"/>
        <end position="19"/>
    </location>
</feature>
<feature type="compositionally biased region" description="Low complexity" evidence="4">
    <location>
        <begin position="20"/>
        <end position="32"/>
    </location>
</feature>
<feature type="compositionally biased region" description="Basic residues" evidence="4">
    <location>
        <begin position="91"/>
        <end position="103"/>
    </location>
</feature>
<feature type="compositionally biased region" description="Acidic residues" evidence="4">
    <location>
        <begin position="368"/>
        <end position="386"/>
    </location>
</feature>
<feature type="compositionally biased region" description="Polar residues" evidence="4">
    <location>
        <begin position="394"/>
        <end position="407"/>
    </location>
</feature>
<feature type="active site" description="Proton acceptor" evidence="1">
    <location>
        <position position="287"/>
    </location>
</feature>
<feature type="binding site" evidence="2">
    <location>
        <begin position="263"/>
        <end position="264"/>
    </location>
    <ligand>
        <name>S-adenosyl-L-methionine</name>
        <dbReference type="ChEBI" id="CHEBI:59789"/>
    </ligand>
</feature>
<feature type="binding site" evidence="2">
    <location>
        <position position="283"/>
    </location>
    <ligand>
        <name>S-adenosyl-L-methionine</name>
        <dbReference type="ChEBI" id="CHEBI:59789"/>
    </ligand>
</feature>
<feature type="binding site" evidence="2">
    <location>
        <begin position="287"/>
        <end position="291"/>
    </location>
    <ligand>
        <name>S-adenosyl-L-methionine</name>
        <dbReference type="ChEBI" id="CHEBI:59789"/>
    </ligand>
</feature>
<feature type="binding site" evidence="2">
    <location>
        <position position="295"/>
    </location>
    <ligand>
        <name>S-adenosyl-L-methionine</name>
        <dbReference type="ChEBI" id="CHEBI:59789"/>
    </ligand>
</feature>
<feature type="binding site" evidence="2">
    <location>
        <position position="309"/>
    </location>
    <ligand>
        <name>S-adenosyl-L-methionine</name>
        <dbReference type="ChEBI" id="CHEBI:59789"/>
    </ligand>
</feature>
<feature type="binding site" evidence="2">
    <location>
        <begin position="321"/>
        <end position="323"/>
    </location>
    <ligand>
        <name>S-adenosyl-L-methionine</name>
        <dbReference type="ChEBI" id="CHEBI:59789"/>
    </ligand>
</feature>
<sequence length="407" mass="46769">MDLDPAHKPSQAEETKEQGNEQGQVEQNQAQQDPTTGPQAETEKAIIPSQGSTIPQKRSAEDEPAQPMSKNALKRLRKQQQWEAGKEDRKLKRKDSRIARKVRKREERDALIAQGINPYANKQKPPSVNVPISLIFDCEFEQYMREKEIISLGSQITRSYSENKNAKYRTNIYVSNWNGKLAERFHQILDDKHQNWKGIDFVEGDFIECAEKAREKMKHENMIEPLQRSLTEKSPWARDEKDPLPLPDPEPEPRPEYSDIVYLSSDSPYTLERLEPNTSYVIGGLVDKNREKGLCYKRARERGIRTARLPIGQYMVMQSRTVLTTNHVVEIMLKWLEYENWGEAFMSVIPKRKGGKLKEQQGASGETQETEEAEAEDPEEENEETKDPDAEASASKQNTPKVEVTSK</sequence>
<reference key="1">
    <citation type="journal article" date="2007" name="Science">
        <title>The Fusarium graminearum genome reveals a link between localized polymorphism and pathogen specialization.</title>
        <authorList>
            <person name="Cuomo C.A."/>
            <person name="Gueldener U."/>
            <person name="Xu J.-R."/>
            <person name="Trail F."/>
            <person name="Turgeon B.G."/>
            <person name="Di Pietro A."/>
            <person name="Walton J.D."/>
            <person name="Ma L.-J."/>
            <person name="Baker S.E."/>
            <person name="Rep M."/>
            <person name="Adam G."/>
            <person name="Antoniw J."/>
            <person name="Baldwin T."/>
            <person name="Calvo S.E."/>
            <person name="Chang Y.-L."/>
            <person name="DeCaprio D."/>
            <person name="Gale L.R."/>
            <person name="Gnerre S."/>
            <person name="Goswami R.S."/>
            <person name="Hammond-Kosack K."/>
            <person name="Harris L.J."/>
            <person name="Hilburn K."/>
            <person name="Kennell J.C."/>
            <person name="Kroken S."/>
            <person name="Magnuson J.K."/>
            <person name="Mannhaupt G."/>
            <person name="Mauceli E.W."/>
            <person name="Mewes H.-W."/>
            <person name="Mitterbauer R."/>
            <person name="Muehlbauer G."/>
            <person name="Muensterkoetter M."/>
            <person name="Nelson D."/>
            <person name="O'Donnell K."/>
            <person name="Ouellet T."/>
            <person name="Qi W."/>
            <person name="Quesneville H."/>
            <person name="Roncero M.I.G."/>
            <person name="Seong K.-Y."/>
            <person name="Tetko I.V."/>
            <person name="Urban M."/>
            <person name="Waalwijk C."/>
            <person name="Ward T.J."/>
            <person name="Yao J."/>
            <person name="Birren B.W."/>
            <person name="Kistler H.C."/>
        </authorList>
    </citation>
    <scope>NUCLEOTIDE SEQUENCE [LARGE SCALE GENOMIC DNA]</scope>
    <source>
        <strain>ATCC MYA-4620 / CBS 123657 / FGSC 9075 / NRRL 31084 / PH-1</strain>
    </source>
</reference>
<reference key="2">
    <citation type="journal article" date="2010" name="Nature">
        <title>Comparative genomics reveals mobile pathogenicity chromosomes in Fusarium.</title>
        <authorList>
            <person name="Ma L.-J."/>
            <person name="van der Does H.C."/>
            <person name="Borkovich K.A."/>
            <person name="Coleman J.J."/>
            <person name="Daboussi M.-J."/>
            <person name="Di Pietro A."/>
            <person name="Dufresne M."/>
            <person name="Freitag M."/>
            <person name="Grabherr M."/>
            <person name="Henrissat B."/>
            <person name="Houterman P.M."/>
            <person name="Kang S."/>
            <person name="Shim W.-B."/>
            <person name="Woloshuk C."/>
            <person name="Xie X."/>
            <person name="Xu J.-R."/>
            <person name="Antoniw J."/>
            <person name="Baker S.E."/>
            <person name="Bluhm B.H."/>
            <person name="Breakspear A."/>
            <person name="Brown D.W."/>
            <person name="Butchko R.A.E."/>
            <person name="Chapman S."/>
            <person name="Coulson R."/>
            <person name="Coutinho P.M."/>
            <person name="Danchin E.G.J."/>
            <person name="Diener A."/>
            <person name="Gale L.R."/>
            <person name="Gardiner D.M."/>
            <person name="Goff S."/>
            <person name="Hammond-Kosack K.E."/>
            <person name="Hilburn K."/>
            <person name="Hua-Van A."/>
            <person name="Jonkers W."/>
            <person name="Kazan K."/>
            <person name="Kodira C.D."/>
            <person name="Koehrsen M."/>
            <person name="Kumar L."/>
            <person name="Lee Y.-H."/>
            <person name="Li L."/>
            <person name="Manners J.M."/>
            <person name="Miranda-Saavedra D."/>
            <person name="Mukherjee M."/>
            <person name="Park G."/>
            <person name="Park J."/>
            <person name="Park S.-Y."/>
            <person name="Proctor R.H."/>
            <person name="Regev A."/>
            <person name="Ruiz-Roldan M.C."/>
            <person name="Sain D."/>
            <person name="Sakthikumar S."/>
            <person name="Sykes S."/>
            <person name="Schwartz D.C."/>
            <person name="Turgeon B.G."/>
            <person name="Wapinski I."/>
            <person name="Yoder O."/>
            <person name="Young S."/>
            <person name="Zeng Q."/>
            <person name="Zhou S."/>
            <person name="Galagan J."/>
            <person name="Cuomo C.A."/>
            <person name="Kistler H.C."/>
            <person name="Rep M."/>
        </authorList>
    </citation>
    <scope>GENOME REANNOTATION</scope>
    <source>
        <strain>ATCC MYA-4620 / CBS 123657 / FGSC 9075 / NRRL 31084 / PH-1</strain>
    </source>
</reference>
<reference key="3">
    <citation type="journal article" date="2015" name="BMC Genomics">
        <title>The completed genome sequence of the pathogenic ascomycete fungus Fusarium graminearum.</title>
        <authorList>
            <person name="King R."/>
            <person name="Urban M."/>
            <person name="Hammond-Kosack M.C.U."/>
            <person name="Hassani-Pak K."/>
            <person name="Hammond-Kosack K.E."/>
        </authorList>
    </citation>
    <scope>NUCLEOTIDE SEQUENCE [LARGE SCALE GENOMIC DNA]</scope>
    <source>
        <strain>ATCC MYA-4620 / CBS 123657 / FGSC 9075 / NRRL 31084 / PH-1</strain>
    </source>
</reference>
<evidence type="ECO:0000250" key="1">
    <source>
        <dbReference type="UniProtKB" id="O14214"/>
    </source>
</evidence>
<evidence type="ECO:0000250" key="2">
    <source>
        <dbReference type="UniProtKB" id="Q12400"/>
    </source>
</evidence>
<evidence type="ECO:0000255" key="3">
    <source>
        <dbReference type="PROSITE-ProRule" id="PRU01012"/>
    </source>
</evidence>
<evidence type="ECO:0000256" key="4">
    <source>
        <dbReference type="SAM" id="MobiDB-lite"/>
    </source>
</evidence>
<accession>Q4I8X0</accession>
<accession>A0A098E082</accession>
<accession>A0A0E0SM52</accession>
<accession>V6RDT9</accession>